<evidence type="ECO:0000250" key="1"/>
<evidence type="ECO:0000250" key="2">
    <source>
        <dbReference type="UniProtKB" id="O09114"/>
    </source>
</evidence>
<evidence type="ECO:0000250" key="3">
    <source>
        <dbReference type="UniProtKB" id="P41222"/>
    </source>
</evidence>
<evidence type="ECO:0000269" key="4">
    <source>
    </source>
</evidence>
<evidence type="ECO:0000269" key="5">
    <source>
    </source>
</evidence>
<evidence type="ECO:0000269" key="6">
    <source>
    </source>
</evidence>
<evidence type="ECO:0000305" key="7"/>
<feature type="signal peptide" evidence="6">
    <location>
        <begin position="1"/>
        <end position="28"/>
    </location>
</feature>
<feature type="chain" id="PRO_0000017940" description="Prostaglandin-H2 D-isomerase">
    <location>
        <begin position="29"/>
        <end position="191"/>
    </location>
</feature>
<feature type="active site" description="Nucleophile" evidence="3">
    <location>
        <position position="65"/>
    </location>
</feature>
<feature type="glycosylation site" description="N-linked (GlcNAc...) asparagine" evidence="1">
    <location>
        <position position="51"/>
    </location>
</feature>
<feature type="glycosylation site" description="N-linked (GlcNAc...) asparagine" evidence="1">
    <location>
        <position position="78"/>
    </location>
</feature>
<feature type="disulfide bond" evidence="2">
    <location>
        <begin position="89"/>
        <end position="186"/>
    </location>
</feature>
<keyword id="KW-0963">Cytoplasm</keyword>
<keyword id="KW-0903">Direct protein sequencing</keyword>
<keyword id="KW-1015">Disulfide bond</keyword>
<keyword id="KW-0256">Endoplasmic reticulum</keyword>
<keyword id="KW-0275">Fatty acid biosynthesis</keyword>
<keyword id="KW-0276">Fatty acid metabolism</keyword>
<keyword id="KW-0325">Glycoprotein</keyword>
<keyword id="KW-0333">Golgi apparatus</keyword>
<keyword id="KW-0413">Isomerase</keyword>
<keyword id="KW-0444">Lipid biosynthesis</keyword>
<keyword id="KW-0443">Lipid metabolism</keyword>
<keyword id="KW-0467">Mast cell degranulation</keyword>
<keyword id="KW-0472">Membrane</keyword>
<keyword id="KW-0539">Nucleus</keyword>
<keyword id="KW-0643">Prostaglandin biosynthesis</keyword>
<keyword id="KW-0644">Prostaglandin metabolism</keyword>
<keyword id="KW-1185">Reference proteome</keyword>
<keyword id="KW-0964">Secreted</keyword>
<keyword id="KW-0732">Signal</keyword>
<keyword id="KW-0813">Transport</keyword>
<gene>
    <name type="primary">PTGDS</name>
</gene>
<accession>O02853</accession>
<accession>A2VDW5</accession>
<accession>A5PJE8</accession>
<protein>
    <recommendedName>
        <fullName>Prostaglandin-H2 D-isomerase</fullName>
        <ecNumber evidence="6">5.3.99.2</ecNumber>
    </recommendedName>
    <alternativeName>
        <fullName>Glutathione-independent PGD synthase</fullName>
    </alternativeName>
    <alternativeName>
        <fullName>Lipocalin-type prostaglandin-D synthase</fullName>
    </alternativeName>
    <alternativeName>
        <fullName>Prostaglandin-D2 synthase</fullName>
        <shortName>PGD2 synthase</shortName>
        <shortName>PGDS</shortName>
        <shortName>PGDS2</shortName>
    </alternativeName>
</protein>
<reference key="1">
    <citation type="journal article" date="1998" name="Biol. Reprod.">
        <title>Identification of a fertility-associated protein in bull seminal plasma as lipocalin-type prostaglandin D synthase.</title>
        <authorList>
            <person name="Gerena R.L."/>
            <person name="Irikura D."/>
            <person name="Urade Y."/>
            <person name="Eguchi N."/>
            <person name="Chapman D.A."/>
            <person name="Killian G.J."/>
        </authorList>
    </citation>
    <scope>NUCLEOTIDE SEQUENCE [MRNA]</scope>
    <scope>PROTEIN SEQUENCE OF 29-48</scope>
    <scope>CATALYTIC ACTIVITY</scope>
    <scope>TISSUE SPECIFICITY</scope>
    <scope>FUNCTION</scope>
    <source>
        <tissue>Brain</tissue>
    </source>
</reference>
<reference key="2">
    <citation type="submission" date="2007-06" db="EMBL/GenBank/DDBJ databases">
        <authorList>
            <consortium name="NIH - Mammalian Gene Collection (MGC) project"/>
        </authorList>
    </citation>
    <scope>NUCLEOTIDE SEQUENCE [LARGE SCALE MRNA]</scope>
    <source>
        <strain>Hereford</strain>
        <tissue>Fetal pons</tissue>
        <tissue>Hypothalamus</tissue>
    </source>
</reference>
<reference key="3">
    <citation type="journal article" date="2000" name="Biol. Reprod.">
        <title>Immunocytochemical localization of lipocalin-type prostaglandin D synthase in the bull testis and epididymis and on ejaculated sperm.</title>
        <authorList>
            <person name="Gerena R.L."/>
            <person name="Irikura D."/>
            <person name="Eguchi N."/>
            <person name="Urade Y."/>
            <person name="Killian G.J."/>
        </authorList>
    </citation>
    <scope>TISSUE SPECIFICITY</scope>
</reference>
<reference key="4">
    <citation type="journal article" date="2002" name="Biol. Reprod.">
        <title>Mammalian lipocalin-type prostaglandin D2 synthase in the fluids of the male genital tract: putative biochemical and physiological functions.</title>
        <authorList>
            <person name="Fouchecourt S."/>
            <person name="Charpigny G."/>
            <person name="Reinaud P."/>
            <person name="Dumont P."/>
            <person name="Dacheux J.-L."/>
        </authorList>
    </citation>
    <scope>TISSUE SPECIFICITY</scope>
</reference>
<proteinExistence type="evidence at protein level"/>
<name>PTGDS_BOVIN</name>
<comment type="function">
    <text evidence="1 2 3 6">Catalyzes the conversion of PGH2 to PGD2, a prostaglandin involved in smooth muscle contraction/relaxation and a potent inhibitor of platelet aggregation (PubMed:9510973). Involved in a variety of CNS functions, such as sedation, NREM sleep and PGE2-induced allodynia, and may have an anti-apoptotic role in oligodendrocytes. Binds small non-substrate lipophilic molecules, including biliverdin, bilirubin, retinal, retinoic acid and thyroid hormone, and may act as a scavenger for harmful hydrophobic molecules and as a secretory retinoid and thyroid hormone transporter. Possibly involved in development and maintenance of the blood-brain, blood-retina, blood-aqueous humor and blood-testis barrier. It is likely to play important roles in both maturation and maintenance of the central nervous system and male reproductive system (By similarity). Involved in PLA2G3-dependent maturation of mast cells. PLA2G3 is secreted by immature mast cells and acts on nearby fibroblasts upstream to PTDGS to synthesize PGD2, which in turn promotes mast cell maturation and degranulation via PTGDR (By similarity).</text>
</comment>
<comment type="catalytic activity">
    <reaction evidence="6">
        <text>prostaglandin H2 = prostaglandin D2</text>
        <dbReference type="Rhea" id="RHEA:10600"/>
        <dbReference type="ChEBI" id="CHEBI:57405"/>
        <dbReference type="ChEBI" id="CHEBI:57406"/>
        <dbReference type="EC" id="5.3.99.2"/>
    </reaction>
</comment>
<comment type="subunit">
    <text evidence="3">Monomer.</text>
</comment>
<comment type="subcellular location">
    <subcellularLocation>
        <location evidence="3">Rough endoplasmic reticulum</location>
    </subcellularLocation>
    <subcellularLocation>
        <location evidence="3">Nucleus membrane</location>
    </subcellularLocation>
    <subcellularLocation>
        <location evidence="3">Golgi apparatus</location>
    </subcellularLocation>
    <subcellularLocation>
        <location evidence="3">Cytoplasm</location>
        <location evidence="3">Perinuclear region</location>
    </subcellularLocation>
    <subcellularLocation>
        <location evidence="3">Secreted</location>
    </subcellularLocation>
    <text evidence="3">Detected on rough endoplasmic reticulum of arachnoid and menigioma cells. Localized to the nuclear envelope, Golgi apparatus, secretory vesicles and spherical cytoplasmic structures in arachnoid trabecular cells, and to circular cytoplasmic structures in meningeal macrophages and perivascular microglial cells. In oligodendrocytes, localized to the rough endoplasmic reticulum and nuclear envelope. In retinal pigment epithelial cells, localized to distinct cytoplasmic domains including the perinuclear region. Also secreted.</text>
</comment>
<comment type="tissue specificity">
    <text evidence="4 5 6">In the male reproductive system, expressed in the testis, epididymis and prostate, and secreted into the seminal fluid.</text>
</comment>
<comment type="developmental stage">
    <text>During spermatogenesis, expression is low in the round spermatids of stages I-II before increasing to peak in the elongating spermatids of stages III-VII. Decreased expression observed in stage VIII.</text>
</comment>
<comment type="domain">
    <text evidence="3">Forms a beta-barrel structure that accommodates hydrophobic ligands in its interior.</text>
</comment>
<comment type="similarity">
    <text evidence="7">Belongs to the calycin superfamily. Lipocalin family.</text>
</comment>
<organism>
    <name type="scientific">Bos taurus</name>
    <name type="common">Bovine</name>
    <dbReference type="NCBI Taxonomy" id="9913"/>
    <lineage>
        <taxon>Eukaryota</taxon>
        <taxon>Metazoa</taxon>
        <taxon>Chordata</taxon>
        <taxon>Craniata</taxon>
        <taxon>Vertebrata</taxon>
        <taxon>Euteleostomi</taxon>
        <taxon>Mammalia</taxon>
        <taxon>Eutheria</taxon>
        <taxon>Laurasiatheria</taxon>
        <taxon>Artiodactyla</taxon>
        <taxon>Ruminantia</taxon>
        <taxon>Pecora</taxon>
        <taxon>Bovidae</taxon>
        <taxon>Bovinae</taxon>
        <taxon>Bos</taxon>
    </lineage>
</organism>
<dbReference type="EC" id="5.3.99.2" evidence="6"/>
<dbReference type="EMBL" id="AB004647">
    <property type="protein sequence ID" value="BAA20431.1"/>
    <property type="molecule type" value="mRNA"/>
</dbReference>
<dbReference type="EMBL" id="BC133435">
    <property type="protein sequence ID" value="AAI33436.1"/>
    <property type="molecule type" value="mRNA"/>
</dbReference>
<dbReference type="EMBL" id="BC133438">
    <property type="protein sequence ID" value="AAI33439.1"/>
    <property type="molecule type" value="mRNA"/>
</dbReference>
<dbReference type="EMBL" id="BC133445">
    <property type="protein sequence ID" value="AAI33446.1"/>
    <property type="molecule type" value="mRNA"/>
</dbReference>
<dbReference type="EMBL" id="BC142082">
    <property type="protein sequence ID" value="AAI42083.1"/>
    <property type="molecule type" value="mRNA"/>
</dbReference>
<dbReference type="RefSeq" id="NP_777216.1">
    <property type="nucleotide sequence ID" value="NM_174791.4"/>
</dbReference>
<dbReference type="SMR" id="O02853"/>
<dbReference type="FunCoup" id="O02853">
    <property type="interactions" value="73"/>
</dbReference>
<dbReference type="IntAct" id="O02853">
    <property type="interactions" value="1"/>
</dbReference>
<dbReference type="STRING" id="9913.ENSBTAP00000068174"/>
<dbReference type="BindingDB" id="O02853"/>
<dbReference type="ChEMBL" id="CHEMBL4651"/>
<dbReference type="GlyCosmos" id="O02853">
    <property type="glycosylation" value="2 sites, No reported glycans"/>
</dbReference>
<dbReference type="GlyGen" id="O02853">
    <property type="glycosylation" value="2 sites"/>
</dbReference>
<dbReference type="PaxDb" id="9913-ENSBTAP00000020065"/>
<dbReference type="PeptideAtlas" id="O02853"/>
<dbReference type="Ensembl" id="ENSBTAT00000077876.2">
    <property type="protein sequence ID" value="ENSBTAP00000068174.2"/>
    <property type="gene ID" value="ENSBTAG00000015074.7"/>
</dbReference>
<dbReference type="GeneID" id="286858"/>
<dbReference type="KEGG" id="bta:286858"/>
<dbReference type="CTD" id="5730"/>
<dbReference type="VEuPathDB" id="HostDB:ENSBTAG00000015074"/>
<dbReference type="eggNOG" id="ENOG502S6GK">
    <property type="taxonomic scope" value="Eukaryota"/>
</dbReference>
<dbReference type="GeneTree" id="ENSGT01050000244868"/>
<dbReference type="HOGENOM" id="CLU_094061_1_1_1"/>
<dbReference type="InParanoid" id="O02853"/>
<dbReference type="OMA" id="QIWNNDN"/>
<dbReference type="OrthoDB" id="9048943at2759"/>
<dbReference type="TreeFam" id="TF336103"/>
<dbReference type="Reactome" id="R-BTA-2162123">
    <property type="pathway name" value="Synthesis of Prostaglandins (PG) and Thromboxanes (TX)"/>
</dbReference>
<dbReference type="PRO" id="PR:O02853"/>
<dbReference type="Proteomes" id="UP000009136">
    <property type="component" value="Chromosome 11"/>
</dbReference>
<dbReference type="Bgee" id="ENSBTAG00000015074">
    <property type="expression patterns" value="Expressed in pigment epithelium of eye and 104 other cell types or tissues"/>
</dbReference>
<dbReference type="GO" id="GO:0005576">
    <property type="term" value="C:extracellular region"/>
    <property type="evidence" value="ECO:0000314"/>
    <property type="project" value="UniProtKB"/>
</dbReference>
<dbReference type="GO" id="GO:0005615">
    <property type="term" value="C:extracellular space"/>
    <property type="evidence" value="ECO:0000250"/>
    <property type="project" value="UniProtKB"/>
</dbReference>
<dbReference type="GO" id="GO:0005794">
    <property type="term" value="C:Golgi apparatus"/>
    <property type="evidence" value="ECO:0000250"/>
    <property type="project" value="UniProtKB"/>
</dbReference>
<dbReference type="GO" id="GO:0031965">
    <property type="term" value="C:nuclear membrane"/>
    <property type="evidence" value="ECO:0007669"/>
    <property type="project" value="UniProtKB-SubCell"/>
</dbReference>
<dbReference type="GO" id="GO:0048471">
    <property type="term" value="C:perinuclear region of cytoplasm"/>
    <property type="evidence" value="ECO:0007669"/>
    <property type="project" value="UniProtKB-SubCell"/>
</dbReference>
<dbReference type="GO" id="GO:0005791">
    <property type="term" value="C:rough endoplasmic reticulum"/>
    <property type="evidence" value="ECO:0000250"/>
    <property type="project" value="UniProtKB"/>
</dbReference>
<dbReference type="GO" id="GO:0004667">
    <property type="term" value="F:prostaglandin-D synthase activity"/>
    <property type="evidence" value="ECO:0000250"/>
    <property type="project" value="UniProtKB"/>
</dbReference>
<dbReference type="GO" id="GO:0005501">
    <property type="term" value="F:retinoid binding"/>
    <property type="evidence" value="ECO:0000250"/>
    <property type="project" value="UniProtKB"/>
</dbReference>
<dbReference type="GO" id="GO:0036094">
    <property type="term" value="F:small molecule binding"/>
    <property type="evidence" value="ECO:0007669"/>
    <property type="project" value="InterPro"/>
</dbReference>
<dbReference type="GO" id="GO:0043303">
    <property type="term" value="P:mast cell degranulation"/>
    <property type="evidence" value="ECO:0007669"/>
    <property type="project" value="UniProtKB-KW"/>
</dbReference>
<dbReference type="GO" id="GO:0044793">
    <property type="term" value="P:negative regulation by host of viral process"/>
    <property type="evidence" value="ECO:0000314"/>
    <property type="project" value="AgBase"/>
</dbReference>
<dbReference type="GO" id="GO:0045071">
    <property type="term" value="P:negative regulation of viral genome replication"/>
    <property type="evidence" value="ECO:0000314"/>
    <property type="project" value="AgBase"/>
</dbReference>
<dbReference type="GO" id="GO:0001516">
    <property type="term" value="P:prostaglandin biosynthetic process"/>
    <property type="evidence" value="ECO:0000250"/>
    <property type="project" value="UniProtKB"/>
</dbReference>
<dbReference type="GO" id="GO:0045187">
    <property type="term" value="P:regulation of circadian sleep/wake cycle, sleep"/>
    <property type="evidence" value="ECO:0000250"/>
    <property type="project" value="UniProtKB"/>
</dbReference>
<dbReference type="FunFam" id="2.40.128.20:FF:000010">
    <property type="entry name" value="Prostaglandin-H2 D-isomerase"/>
    <property type="match status" value="1"/>
</dbReference>
<dbReference type="Gene3D" id="2.40.128.20">
    <property type="match status" value="1"/>
</dbReference>
<dbReference type="InterPro" id="IPR012674">
    <property type="entry name" value="Calycin"/>
</dbReference>
<dbReference type="InterPro" id="IPR002345">
    <property type="entry name" value="Lipocalin"/>
</dbReference>
<dbReference type="InterPro" id="IPR000566">
    <property type="entry name" value="Lipocln_cytosolic_FA-bd_dom"/>
</dbReference>
<dbReference type="PANTHER" id="PTHR11430">
    <property type="entry name" value="LIPOCALIN"/>
    <property type="match status" value="1"/>
</dbReference>
<dbReference type="PANTHER" id="PTHR11430:SF86">
    <property type="entry name" value="PROSTAGLANDIN-H2 D-ISOMERASE"/>
    <property type="match status" value="1"/>
</dbReference>
<dbReference type="Pfam" id="PF00061">
    <property type="entry name" value="Lipocalin"/>
    <property type="match status" value="1"/>
</dbReference>
<dbReference type="PRINTS" id="PR00179">
    <property type="entry name" value="LIPOCALIN"/>
</dbReference>
<dbReference type="PRINTS" id="PR01254">
    <property type="entry name" value="PGNDSYNTHASE"/>
</dbReference>
<dbReference type="SUPFAM" id="SSF50814">
    <property type="entry name" value="Lipocalins"/>
    <property type="match status" value="1"/>
</dbReference>
<sequence>MATPNRLWMALLLLGVLGVLQTPAPAQAALQPNFEEDKFLGRWFTSGLASNSSWFLEKKKVLSMCKSVVAPAADGGLNLTSTFLRKDQCETRTLLLRPAGPPGCYSYTSPHWSSTHEVSVAETDYETYALLYTEGVRGPGQDFRMATLYSRSQNPRAEVKEHFTTFAKSLGFTEEGIVFLPKTDKCMEEHP</sequence>